<accession>P67906</accession>
<accession>O68928</accession>
<accession>P44378</accession>
<accession>Q0WK99</accession>
<accession>Q9CL31</accession>
<feature type="chain" id="PRO_0000146639" description="Small ribosomal subunit protein uS10">
    <location>
        <begin position="1"/>
        <end position="103"/>
    </location>
</feature>
<gene>
    <name evidence="1" type="primary">rpsJ</name>
    <name type="ordered locus">YPO0209</name>
    <name type="ordered locus">y3989</name>
    <name type="ordered locus">YP_0206</name>
</gene>
<keyword id="KW-1185">Reference proteome</keyword>
<keyword id="KW-0687">Ribonucleoprotein</keyword>
<keyword id="KW-0689">Ribosomal protein</keyword>
<reference key="1">
    <citation type="journal article" date="2001" name="Nature">
        <title>Genome sequence of Yersinia pestis, the causative agent of plague.</title>
        <authorList>
            <person name="Parkhill J."/>
            <person name="Wren B.W."/>
            <person name="Thomson N.R."/>
            <person name="Titball R.W."/>
            <person name="Holden M.T.G."/>
            <person name="Prentice M.B."/>
            <person name="Sebaihia M."/>
            <person name="James K.D."/>
            <person name="Churcher C.M."/>
            <person name="Mungall K.L."/>
            <person name="Baker S."/>
            <person name="Basham D."/>
            <person name="Bentley S.D."/>
            <person name="Brooks K."/>
            <person name="Cerdeno-Tarraga A.-M."/>
            <person name="Chillingworth T."/>
            <person name="Cronin A."/>
            <person name="Davies R.M."/>
            <person name="Davis P."/>
            <person name="Dougan G."/>
            <person name="Feltwell T."/>
            <person name="Hamlin N."/>
            <person name="Holroyd S."/>
            <person name="Jagels K."/>
            <person name="Karlyshev A.V."/>
            <person name="Leather S."/>
            <person name="Moule S."/>
            <person name="Oyston P.C.F."/>
            <person name="Quail M.A."/>
            <person name="Rutherford K.M."/>
            <person name="Simmonds M."/>
            <person name="Skelton J."/>
            <person name="Stevens K."/>
            <person name="Whitehead S."/>
            <person name="Barrell B.G."/>
        </authorList>
    </citation>
    <scope>NUCLEOTIDE SEQUENCE [LARGE SCALE GENOMIC DNA]</scope>
    <source>
        <strain>CO-92 / Biovar Orientalis</strain>
    </source>
</reference>
<reference key="2">
    <citation type="journal article" date="2002" name="J. Bacteriol.">
        <title>Genome sequence of Yersinia pestis KIM.</title>
        <authorList>
            <person name="Deng W."/>
            <person name="Burland V."/>
            <person name="Plunkett G. III"/>
            <person name="Boutin A."/>
            <person name="Mayhew G.F."/>
            <person name="Liss P."/>
            <person name="Perna N.T."/>
            <person name="Rose D.J."/>
            <person name="Mau B."/>
            <person name="Zhou S."/>
            <person name="Schwartz D.C."/>
            <person name="Fetherston J.D."/>
            <person name="Lindler L.E."/>
            <person name="Brubaker R.R."/>
            <person name="Plano G.V."/>
            <person name="Straley S.C."/>
            <person name="McDonough K.A."/>
            <person name="Nilles M.L."/>
            <person name="Matson J.S."/>
            <person name="Blattner F.R."/>
            <person name="Perry R.D."/>
        </authorList>
    </citation>
    <scope>NUCLEOTIDE SEQUENCE [LARGE SCALE GENOMIC DNA]</scope>
    <source>
        <strain>KIM10+ / Biovar Mediaevalis</strain>
    </source>
</reference>
<reference key="3">
    <citation type="journal article" date="2004" name="DNA Res.">
        <title>Complete genome sequence of Yersinia pestis strain 91001, an isolate avirulent to humans.</title>
        <authorList>
            <person name="Song Y."/>
            <person name="Tong Z."/>
            <person name="Wang J."/>
            <person name="Wang L."/>
            <person name="Guo Z."/>
            <person name="Han Y."/>
            <person name="Zhang J."/>
            <person name="Pei D."/>
            <person name="Zhou D."/>
            <person name="Qin H."/>
            <person name="Pang X."/>
            <person name="Han Y."/>
            <person name="Zhai J."/>
            <person name="Li M."/>
            <person name="Cui B."/>
            <person name="Qi Z."/>
            <person name="Jin L."/>
            <person name="Dai R."/>
            <person name="Chen F."/>
            <person name="Li S."/>
            <person name="Ye C."/>
            <person name="Du Z."/>
            <person name="Lin W."/>
            <person name="Wang J."/>
            <person name="Yu J."/>
            <person name="Yang H."/>
            <person name="Wang J."/>
            <person name="Huang P."/>
            <person name="Yang R."/>
        </authorList>
    </citation>
    <scope>NUCLEOTIDE SEQUENCE [LARGE SCALE GENOMIC DNA]</scope>
    <source>
        <strain>91001 / Biovar Mediaevalis</strain>
    </source>
</reference>
<protein>
    <recommendedName>
        <fullName evidence="1">Small ribosomal subunit protein uS10</fullName>
    </recommendedName>
    <alternativeName>
        <fullName evidence="2">30S ribosomal protein S10</fullName>
    </alternativeName>
</protein>
<dbReference type="EMBL" id="AL590842">
    <property type="protein sequence ID" value="CAL18891.1"/>
    <property type="molecule type" value="Genomic_DNA"/>
</dbReference>
<dbReference type="EMBL" id="AE009952">
    <property type="protein sequence ID" value="AAM87533.1"/>
    <property type="molecule type" value="Genomic_DNA"/>
</dbReference>
<dbReference type="EMBL" id="AE017042">
    <property type="protein sequence ID" value="AAS60482.1"/>
    <property type="molecule type" value="Genomic_DNA"/>
</dbReference>
<dbReference type="PIR" id="AI0025">
    <property type="entry name" value="AI0025"/>
</dbReference>
<dbReference type="RefSeq" id="WP_001181005.1">
    <property type="nucleotide sequence ID" value="NZ_WUCM01000078.1"/>
</dbReference>
<dbReference type="RefSeq" id="YP_002345289.1">
    <property type="nucleotide sequence ID" value="NC_003143.1"/>
</dbReference>
<dbReference type="SMR" id="P67906"/>
<dbReference type="STRING" id="214092.YPO0209"/>
<dbReference type="PaxDb" id="214092-YPO0209"/>
<dbReference type="DNASU" id="1148936"/>
<dbReference type="EnsemblBacteria" id="AAS60482">
    <property type="protein sequence ID" value="AAS60482"/>
    <property type="gene ID" value="YP_0206"/>
</dbReference>
<dbReference type="GeneID" id="98390443"/>
<dbReference type="KEGG" id="ype:YPO0209"/>
<dbReference type="KEGG" id="ypk:y3989"/>
<dbReference type="KEGG" id="ypm:YP_0206"/>
<dbReference type="PATRIC" id="fig|1028802.3.peg.176"/>
<dbReference type="eggNOG" id="COG0051">
    <property type="taxonomic scope" value="Bacteria"/>
</dbReference>
<dbReference type="HOGENOM" id="CLU_122625_1_3_6"/>
<dbReference type="OMA" id="VDIEIKM"/>
<dbReference type="OrthoDB" id="9804464at2"/>
<dbReference type="Proteomes" id="UP000000815">
    <property type="component" value="Chromosome"/>
</dbReference>
<dbReference type="Proteomes" id="UP000001019">
    <property type="component" value="Chromosome"/>
</dbReference>
<dbReference type="Proteomes" id="UP000002490">
    <property type="component" value="Chromosome"/>
</dbReference>
<dbReference type="GO" id="GO:0015935">
    <property type="term" value="C:small ribosomal subunit"/>
    <property type="evidence" value="ECO:0000318"/>
    <property type="project" value="GO_Central"/>
</dbReference>
<dbReference type="GO" id="GO:0003735">
    <property type="term" value="F:structural constituent of ribosome"/>
    <property type="evidence" value="ECO:0000318"/>
    <property type="project" value="GO_Central"/>
</dbReference>
<dbReference type="GO" id="GO:0000049">
    <property type="term" value="F:tRNA binding"/>
    <property type="evidence" value="ECO:0007669"/>
    <property type="project" value="UniProtKB-UniRule"/>
</dbReference>
<dbReference type="GO" id="GO:0006412">
    <property type="term" value="P:translation"/>
    <property type="evidence" value="ECO:0007669"/>
    <property type="project" value="UniProtKB-UniRule"/>
</dbReference>
<dbReference type="FunFam" id="3.30.70.600:FF:000001">
    <property type="entry name" value="30S ribosomal protein S10"/>
    <property type="match status" value="1"/>
</dbReference>
<dbReference type="Gene3D" id="3.30.70.600">
    <property type="entry name" value="Ribosomal protein S10 domain"/>
    <property type="match status" value="1"/>
</dbReference>
<dbReference type="HAMAP" id="MF_00508">
    <property type="entry name" value="Ribosomal_uS10"/>
    <property type="match status" value="1"/>
</dbReference>
<dbReference type="InterPro" id="IPR001848">
    <property type="entry name" value="Ribosomal_uS10"/>
</dbReference>
<dbReference type="InterPro" id="IPR018268">
    <property type="entry name" value="Ribosomal_uS10_CS"/>
</dbReference>
<dbReference type="InterPro" id="IPR027486">
    <property type="entry name" value="Ribosomal_uS10_dom"/>
</dbReference>
<dbReference type="InterPro" id="IPR036838">
    <property type="entry name" value="Ribosomal_uS10_dom_sf"/>
</dbReference>
<dbReference type="NCBIfam" id="NF001861">
    <property type="entry name" value="PRK00596.1"/>
    <property type="match status" value="1"/>
</dbReference>
<dbReference type="NCBIfam" id="TIGR01049">
    <property type="entry name" value="rpsJ_bact"/>
    <property type="match status" value="1"/>
</dbReference>
<dbReference type="PANTHER" id="PTHR11700">
    <property type="entry name" value="30S RIBOSOMAL PROTEIN S10 FAMILY MEMBER"/>
    <property type="match status" value="1"/>
</dbReference>
<dbReference type="Pfam" id="PF00338">
    <property type="entry name" value="Ribosomal_S10"/>
    <property type="match status" value="1"/>
</dbReference>
<dbReference type="PRINTS" id="PR00971">
    <property type="entry name" value="RIBOSOMALS10"/>
</dbReference>
<dbReference type="SMART" id="SM01403">
    <property type="entry name" value="Ribosomal_S10"/>
    <property type="match status" value="1"/>
</dbReference>
<dbReference type="SUPFAM" id="SSF54999">
    <property type="entry name" value="Ribosomal protein S10"/>
    <property type="match status" value="1"/>
</dbReference>
<dbReference type="PROSITE" id="PS00361">
    <property type="entry name" value="RIBOSOMAL_S10"/>
    <property type="match status" value="1"/>
</dbReference>
<name>RS10_YERPE</name>
<proteinExistence type="inferred from homology"/>
<sequence length="103" mass="11767">MQNQRIRIRLKAFDHRLIDQSTAEIVETAKRTGAQVRGPIPLPTRKERFTVLISPHVNKDARDQYEIRTHKRLVDIVEPTEKTVDALMRLDLAAGVDVQISLG</sequence>
<comment type="function">
    <text evidence="1">Involved in the binding of tRNA to the ribosomes.</text>
</comment>
<comment type="subunit">
    <text evidence="1">Part of the 30S ribosomal subunit.</text>
</comment>
<comment type="similarity">
    <text evidence="1">Belongs to the universal ribosomal protein uS10 family.</text>
</comment>
<organism>
    <name type="scientific">Yersinia pestis</name>
    <dbReference type="NCBI Taxonomy" id="632"/>
    <lineage>
        <taxon>Bacteria</taxon>
        <taxon>Pseudomonadati</taxon>
        <taxon>Pseudomonadota</taxon>
        <taxon>Gammaproteobacteria</taxon>
        <taxon>Enterobacterales</taxon>
        <taxon>Yersiniaceae</taxon>
        <taxon>Yersinia</taxon>
    </lineage>
</organism>
<evidence type="ECO:0000255" key="1">
    <source>
        <dbReference type="HAMAP-Rule" id="MF_00508"/>
    </source>
</evidence>
<evidence type="ECO:0000305" key="2"/>